<sequence>MPRKKEQASKSENEKQTSNVQAQDFKTAIQPDTATAQLIKTYSNPKQRGDKGEIVYDGGQSSKLAEVVDQTTEPHNADGAVKDGRIAPVKLDLEKQKLDKLKLFEASPFDPLTVKNNQDVVDKLYATQSSSIQEVVPTKTFATELQFGVTSEDMAKIYGAVVAVSKNVNSSVTYEVKRGTHELIKVPTIPHNLVLIQSDNGKHALIKEDLGQWPVETGVSLVNQAGVFAVQLANKLGIDKPFVLDAGSNYFTDTSFIDTRKYCTDGLSPREIQKALNRQRAYYDRPELTIAENRTLLSQSIVYPDVDGNDVSVIFSGAMSHAIFTYAQSQWSKNIIRLDDYIREITLTVPKHYRPRRFKEIEHTHGYVYRELNQGSLLPLVDANLKEASSYYFKKLMPSISNVPVDARTLQSATSALAADTGLVDRAPHVSMLTNRLTTANASSVRAITVLTCMFKQFRIGMTYSPDPNIMDVAAATCMLLFRPAQSISDEQYRYCLQTMAVFLTNTTYDIVNNDTVDVLKTKLRNQGWPLVERYNAIEVDMSVEPLRSPGQVGRYYNPFNIDPLTKKHVEDRLEEFPNQVQVGRFRNVSNNAVGAALAAFLRACRDKTSANWKGYSILVSRYRSLIPNELFESLRNISGEYNINPQDEHSFFFALAQINADEEFTGVIDKESAEYLDEYATLAREISNSLTLVKAAFGPLERTSGSILNHANNLNKVINRVFADKPLISETMLKILTIDGTTGKDGYRNWLDKLVGHNYPVYVEPVVNIVNFISARFIADSSYFGYTNEIMIMPNHITVPVDDRFGFRDSPFCMSLPRTIMGNEVRRISYSVFSMMEDIDEVISEGFILYDAYFNFTYDIMTTDGVTRLKEDILVVTDTGNDIKPIHFYIYFENKNDKKLRYESKMNVNYRLYIKTPACLLPLNDYMRAQHEYVSPSSSRVYIKDPAVVYTRS</sequence>
<comment type="function">
    <text evidence="3 4">Self-assembles to form an icosahedral capsid with a pseudo T=2 symmetry, about 60 nm in diameter, and consisting of 120 VP2 subunits.</text>
</comment>
<comment type="subcellular location">
    <subcellularLocation>
        <location evidence="2">Virion</location>
    </subcellularLocation>
</comment>
<reference key="1">
    <citation type="journal article" date="2000" name="J. Gen. Virol.">
        <title>Complete sequence determination and genetic analysis of Banna virus and Kadipiro virus: proposal for assignment to a new genus (Seadornavirus) within the family Reoviridae.</title>
        <authorList>
            <person name="Attoui H."/>
            <person name="Billoir F."/>
            <person name="Biagini P."/>
            <person name="de Micco P."/>
            <person name="de Lamballerie X."/>
        </authorList>
    </citation>
    <scope>NUCLEOTIDE SEQUENCE [GENOMIC RNA]</scope>
    <source>
        <strain>JKT-6423</strain>
    </source>
</reference>
<reference key="2">
    <citation type="journal article" date="2005" name="J. Gen. Virol.">
        <title>Structural organization of an encephalitic human isolate of Banna virus (genus Seadornavirus, family Reoviridae).</title>
        <authorList>
            <person name="Mohd Jaafar F."/>
            <person name="Attoui H."/>
            <person name="Mertens P.P."/>
            <person name="de Micco P."/>
            <person name="de Lamballerie X."/>
        </authorList>
    </citation>
    <scope>SUBCELLULAR LOCATION</scope>
</reference>
<dbReference type="EMBL" id="AF134514">
    <property type="protein sequence ID" value="AAF78855.1"/>
    <property type="molecule type" value="Genomic_RNA"/>
</dbReference>
<dbReference type="RefSeq" id="NP_694475.1">
    <property type="nucleotide sequence ID" value="NC_004217.1"/>
</dbReference>
<dbReference type="SMR" id="Q9INI5"/>
<dbReference type="KEGG" id="vg:995348"/>
<dbReference type="OrthoDB" id="12562at10239"/>
<dbReference type="Proteomes" id="UP000000832">
    <property type="component" value="Genome"/>
</dbReference>
<dbReference type="GO" id="GO:0039625">
    <property type="term" value="C:viral inner capsid"/>
    <property type="evidence" value="ECO:0007669"/>
    <property type="project" value="UniProtKB-KW"/>
</dbReference>
<dbReference type="InterPro" id="IPR026384">
    <property type="entry name" value="Seadorna_VP2"/>
</dbReference>
<dbReference type="NCBIfam" id="TIGR04236">
    <property type="entry name" value="seadorna_VP2"/>
    <property type="match status" value="1"/>
</dbReference>
<proteinExistence type="predicted"/>
<keyword id="KW-0167">Capsid protein</keyword>
<keyword id="KW-1153">Inner capsid protein</keyword>
<keyword id="KW-1185">Reference proteome</keyword>
<keyword id="KW-0946">Virion</keyword>
<protein>
    <recommendedName>
        <fullName>Major inner capsid protein VP2</fullName>
    </recommendedName>
</protein>
<organism>
    <name type="scientific">Banna virus</name>
    <name type="common">BAV</name>
    <dbReference type="NCBI Taxonomy" id="77763"/>
    <lineage>
        <taxon>Viruses</taxon>
        <taxon>Riboviria</taxon>
        <taxon>Orthornavirae</taxon>
        <taxon>Duplornaviricota</taxon>
        <taxon>Resentoviricetes</taxon>
        <taxon>Reovirales</taxon>
        <taxon>Sedoreoviridae</taxon>
        <taxon>Seadornavirus</taxon>
        <taxon>Seadornavirus bannaense</taxon>
    </lineage>
</organism>
<gene>
    <name type="primary">Segment-2</name>
    <name type="synonym">S2</name>
</gene>
<feature type="chain" id="PRO_0000404238" description="Major inner capsid protein VP2">
    <location>
        <begin position="1"/>
        <end position="954"/>
    </location>
</feature>
<feature type="region of interest" description="Disordered" evidence="1">
    <location>
        <begin position="1"/>
        <end position="29"/>
    </location>
</feature>
<feature type="compositionally biased region" description="Basic and acidic residues" evidence="1">
    <location>
        <begin position="1"/>
        <end position="15"/>
    </location>
</feature>
<feature type="compositionally biased region" description="Polar residues" evidence="1">
    <location>
        <begin position="16"/>
        <end position="29"/>
    </location>
</feature>
<accession>Q9INI5</accession>
<evidence type="ECO:0000256" key="1">
    <source>
        <dbReference type="SAM" id="MobiDB-lite"/>
    </source>
</evidence>
<evidence type="ECO:0000269" key="2">
    <source>
    </source>
</evidence>
<evidence type="ECO:0000303" key="3">
    <source>
    </source>
</evidence>
<evidence type="ECO:0000305" key="4"/>
<name>VP2_BANNV</name>